<name>DNAE2_ANADE</name>
<dbReference type="EC" id="2.7.7.7" evidence="1"/>
<dbReference type="EMBL" id="CP000251">
    <property type="protein sequence ID" value="ABC81385.1"/>
    <property type="molecule type" value="Genomic_DNA"/>
</dbReference>
<dbReference type="RefSeq" id="WP_011420668.1">
    <property type="nucleotide sequence ID" value="NC_007760.1"/>
</dbReference>
<dbReference type="SMR" id="Q2IIA8"/>
<dbReference type="STRING" id="290397.Adeh_1612"/>
<dbReference type="KEGG" id="ade:Adeh_1612"/>
<dbReference type="eggNOG" id="COG0587">
    <property type="taxonomic scope" value="Bacteria"/>
</dbReference>
<dbReference type="HOGENOM" id="CLU_001600_4_0_7"/>
<dbReference type="OrthoDB" id="9803237at2"/>
<dbReference type="Proteomes" id="UP000001935">
    <property type="component" value="Chromosome"/>
</dbReference>
<dbReference type="GO" id="GO:0005737">
    <property type="term" value="C:cytoplasm"/>
    <property type="evidence" value="ECO:0007669"/>
    <property type="project" value="UniProtKB-SubCell"/>
</dbReference>
<dbReference type="GO" id="GO:0008408">
    <property type="term" value="F:3'-5' exonuclease activity"/>
    <property type="evidence" value="ECO:0007669"/>
    <property type="project" value="InterPro"/>
</dbReference>
<dbReference type="GO" id="GO:0003887">
    <property type="term" value="F:DNA-directed DNA polymerase activity"/>
    <property type="evidence" value="ECO:0007669"/>
    <property type="project" value="UniProtKB-KW"/>
</dbReference>
<dbReference type="GO" id="GO:0003676">
    <property type="term" value="F:nucleic acid binding"/>
    <property type="evidence" value="ECO:0007669"/>
    <property type="project" value="InterPro"/>
</dbReference>
<dbReference type="GO" id="GO:0006281">
    <property type="term" value="P:DNA repair"/>
    <property type="evidence" value="ECO:0007669"/>
    <property type="project" value="UniProtKB-KW"/>
</dbReference>
<dbReference type="GO" id="GO:0006260">
    <property type="term" value="P:DNA replication"/>
    <property type="evidence" value="ECO:0007669"/>
    <property type="project" value="UniProtKB-KW"/>
</dbReference>
<dbReference type="CDD" id="cd04485">
    <property type="entry name" value="DnaE_OBF"/>
    <property type="match status" value="1"/>
</dbReference>
<dbReference type="CDD" id="cd07434">
    <property type="entry name" value="PHP_PolIIIA_DnaE2"/>
    <property type="match status" value="1"/>
</dbReference>
<dbReference type="Gene3D" id="1.10.150.870">
    <property type="match status" value="1"/>
</dbReference>
<dbReference type="Gene3D" id="1.10.10.1600">
    <property type="entry name" value="Bacterial DNA polymerase III alpha subunit, thumb domain"/>
    <property type="match status" value="1"/>
</dbReference>
<dbReference type="Gene3D" id="3.20.20.140">
    <property type="entry name" value="Metal-dependent hydrolases"/>
    <property type="match status" value="1"/>
</dbReference>
<dbReference type="HAMAP" id="MF_01902">
    <property type="entry name" value="DNApol_error_prone"/>
    <property type="match status" value="1"/>
</dbReference>
<dbReference type="InterPro" id="IPR011708">
    <property type="entry name" value="DNA_pol3_alpha_NTPase_dom"/>
</dbReference>
<dbReference type="InterPro" id="IPR041931">
    <property type="entry name" value="DNA_pol3_alpha_thumb_dom"/>
</dbReference>
<dbReference type="InterPro" id="IPR040982">
    <property type="entry name" value="DNA_pol3_finger"/>
</dbReference>
<dbReference type="InterPro" id="IPR023073">
    <property type="entry name" value="DnaE2"/>
</dbReference>
<dbReference type="InterPro" id="IPR004805">
    <property type="entry name" value="DnaE2/DnaE/PolC"/>
</dbReference>
<dbReference type="InterPro" id="IPR029460">
    <property type="entry name" value="DNAPol_HHH"/>
</dbReference>
<dbReference type="InterPro" id="IPR004365">
    <property type="entry name" value="NA-bd_OB_tRNA"/>
</dbReference>
<dbReference type="InterPro" id="IPR004013">
    <property type="entry name" value="PHP_dom"/>
</dbReference>
<dbReference type="InterPro" id="IPR003141">
    <property type="entry name" value="Pol/His_phosphatase_N"/>
</dbReference>
<dbReference type="InterPro" id="IPR016195">
    <property type="entry name" value="Pol/histidinol_Pase-like"/>
</dbReference>
<dbReference type="NCBIfam" id="TIGR00594">
    <property type="entry name" value="polc"/>
    <property type="match status" value="1"/>
</dbReference>
<dbReference type="NCBIfam" id="NF004225">
    <property type="entry name" value="PRK05672.1"/>
    <property type="match status" value="1"/>
</dbReference>
<dbReference type="PANTHER" id="PTHR32294">
    <property type="entry name" value="DNA POLYMERASE III SUBUNIT ALPHA"/>
    <property type="match status" value="1"/>
</dbReference>
<dbReference type="PANTHER" id="PTHR32294:SF4">
    <property type="entry name" value="ERROR-PRONE DNA POLYMERASE"/>
    <property type="match status" value="1"/>
</dbReference>
<dbReference type="Pfam" id="PF07733">
    <property type="entry name" value="DNA_pol3_alpha"/>
    <property type="match status" value="1"/>
</dbReference>
<dbReference type="Pfam" id="PF17657">
    <property type="entry name" value="DNA_pol3_finger"/>
    <property type="match status" value="1"/>
</dbReference>
<dbReference type="Pfam" id="PF14579">
    <property type="entry name" value="HHH_6"/>
    <property type="match status" value="1"/>
</dbReference>
<dbReference type="Pfam" id="PF02811">
    <property type="entry name" value="PHP"/>
    <property type="match status" value="1"/>
</dbReference>
<dbReference type="Pfam" id="PF01336">
    <property type="entry name" value="tRNA_anti-codon"/>
    <property type="match status" value="1"/>
</dbReference>
<dbReference type="SMART" id="SM00481">
    <property type="entry name" value="POLIIIAc"/>
    <property type="match status" value="1"/>
</dbReference>
<dbReference type="SUPFAM" id="SSF89550">
    <property type="entry name" value="PHP domain-like"/>
    <property type="match status" value="1"/>
</dbReference>
<organism>
    <name type="scientific">Anaeromyxobacter dehalogenans (strain 2CP-C)</name>
    <dbReference type="NCBI Taxonomy" id="290397"/>
    <lineage>
        <taxon>Bacteria</taxon>
        <taxon>Pseudomonadati</taxon>
        <taxon>Myxococcota</taxon>
        <taxon>Myxococcia</taxon>
        <taxon>Myxococcales</taxon>
        <taxon>Cystobacterineae</taxon>
        <taxon>Anaeromyxobacteraceae</taxon>
        <taxon>Anaeromyxobacter</taxon>
    </lineage>
</organism>
<protein>
    <recommendedName>
        <fullName evidence="1">Error-prone DNA polymerase</fullName>
        <ecNumber evidence="1">2.7.7.7</ecNumber>
    </recommendedName>
</protein>
<accession>Q2IIA8</accession>
<proteinExistence type="inferred from homology"/>
<feature type="chain" id="PRO_1000088470" description="Error-prone DNA polymerase">
    <location>
        <begin position="1"/>
        <end position="1132"/>
    </location>
</feature>
<sequence length="1132" mass="121076">MSHAPRYAELRCKSCFSFLEGASHPEELVGRAAELGLSGLALADVNGLYGIVRAHAEAKRQGLPLIVGAELVVAGLAPGRPARLVLLAQDREGYAGLCRLVTRAHCGEGWTGAPPRRERDAVAVPFEAVAAGARGLFALYPGADGDAVARLKDAFGRRAALAVARHRVAGEEARVLAARSAGRRLGVPVAVTNDVHTHARARQVLQDVLTCVRHGTTVDRAGRRLFPNAERTLKGPEELARLWSDFPEGLAAAADIADQCRFRMEEIRGEHPLPPVVVERGGLAGGVEVATSSPAQAARDGARSTTPSLRLRASLPAEPPAAPAPEAPAAAAAPGLAASAASVAADTGADRDGALAGMALLRELVREGARWRYGGEPPEDVARQLARELDLVESLGYASYFLTVWDVVRFARSRGILCQGRGSAANSAVCYVLGITSIDPVRMGLLFERFISAERGEPPDIDVDFEHERREEVLQYVYQRYGRDRAGMVCEVITYRGKSALRDVGKALGLSLGQVDRLAKLVGSYEDLGQVGPELLAQAGLDAADSERVRMTLALARELQGFPRHLSIHVGGFVITRRPLCETVPIEPAAMPGRTIVQWDKDDLAELDLLKVDLLGLGMLTALSRALALLARHRPAPASPTPVPHPDALATIPAEDPEVYEMLGRADSIGVFQVESRAQMSLAPRLRPRNFYDLVISVAIIRPGPIQGGMIHPYLRRRDGKEQVRYPYAPLEPVLARTLGVPLFQEQAMRLAVIAAGFTPGEADELRRVMTHRRSHEKLAAMKARLVAGMAERGISGADAEEIFKQLLGFAGYGFPESHAASFALLVYASAWLKRYHPAAFACALLNSQPMGFYAPHTLVEDAKRHGVEVRGVDVGCSGWESSLEGAAPGRPAAPGEAAVLRVGLHAIRGLPRAVGEAILEARAAGPFGSVAELVRRARLSRAWLVRLAEAGALGTLAPDRRGAVWRSLAVEADGGDLFAGLAPPEPEAALPEASAADEVSADFTTTGLSVRGHPMALVRPGLGGDRIRTARELGRLPDRAPVEVAGLVIVRQRPETARGIVFVSLEDETGIANLVVMPDVYERFRPVVRGAPFLLARGRVERSGKVVNVRVDSVAPLALAPSMDARARDFH</sequence>
<gene>
    <name evidence="1" type="primary">dnaE2</name>
    <name type="ordered locus">Adeh_1612</name>
</gene>
<keyword id="KW-0963">Cytoplasm</keyword>
<keyword id="KW-0227">DNA damage</keyword>
<keyword id="KW-0234">DNA repair</keyword>
<keyword id="KW-0235">DNA replication</keyword>
<keyword id="KW-0239">DNA-directed DNA polymerase</keyword>
<keyword id="KW-0548">Nucleotidyltransferase</keyword>
<keyword id="KW-1185">Reference proteome</keyword>
<keyword id="KW-0808">Transferase</keyword>
<comment type="function">
    <text evidence="1">DNA polymerase involved in damage-induced mutagenesis and translesion synthesis (TLS). It is not the major replicative DNA polymerase.</text>
</comment>
<comment type="catalytic activity">
    <reaction evidence="1">
        <text>DNA(n) + a 2'-deoxyribonucleoside 5'-triphosphate = DNA(n+1) + diphosphate</text>
        <dbReference type="Rhea" id="RHEA:22508"/>
        <dbReference type="Rhea" id="RHEA-COMP:17339"/>
        <dbReference type="Rhea" id="RHEA-COMP:17340"/>
        <dbReference type="ChEBI" id="CHEBI:33019"/>
        <dbReference type="ChEBI" id="CHEBI:61560"/>
        <dbReference type="ChEBI" id="CHEBI:173112"/>
        <dbReference type="EC" id="2.7.7.7"/>
    </reaction>
</comment>
<comment type="subcellular location">
    <subcellularLocation>
        <location evidence="1">Cytoplasm</location>
    </subcellularLocation>
</comment>
<comment type="similarity">
    <text evidence="1">Belongs to the DNA polymerase type-C family. DnaE2 subfamily.</text>
</comment>
<reference key="1">
    <citation type="submission" date="2006-01" db="EMBL/GenBank/DDBJ databases">
        <title>Complete sequence of Anaeromyxobacter dehalogenans 2CP-C.</title>
        <authorList>
            <person name="Copeland A."/>
            <person name="Lucas S."/>
            <person name="Lapidus A."/>
            <person name="Barry K."/>
            <person name="Detter J.C."/>
            <person name="Glavina T."/>
            <person name="Hammon N."/>
            <person name="Israni S."/>
            <person name="Pitluck S."/>
            <person name="Brettin T."/>
            <person name="Bruce D."/>
            <person name="Han C."/>
            <person name="Tapia R."/>
            <person name="Gilna P."/>
            <person name="Kiss H."/>
            <person name="Schmutz J."/>
            <person name="Larimer F."/>
            <person name="Land M."/>
            <person name="Kyrpides N."/>
            <person name="Anderson I."/>
            <person name="Sanford R.A."/>
            <person name="Ritalahti K.M."/>
            <person name="Thomas H.S."/>
            <person name="Kirby J.R."/>
            <person name="Zhulin I.B."/>
            <person name="Loeffler F.E."/>
            <person name="Richardson P."/>
        </authorList>
    </citation>
    <scope>NUCLEOTIDE SEQUENCE [LARGE SCALE GENOMIC DNA]</scope>
    <source>
        <strain>2CP-C</strain>
    </source>
</reference>
<evidence type="ECO:0000255" key="1">
    <source>
        <dbReference type="HAMAP-Rule" id="MF_01902"/>
    </source>
</evidence>